<proteinExistence type="evidence at protein level"/>
<reference key="1">
    <citation type="journal article" date="1990" name="J. Bacteriol.">
        <title>Elucidation of the Erwinia uredovora carotenoid biosynthetic pathway by functional analysis of gene products expressed in Escherichia coli.</title>
        <authorList>
            <person name="Misawa N."/>
            <person name="Nakagawa M."/>
            <person name="Kobayashi K."/>
            <person name="Yamano S."/>
            <person name="Izawa Y."/>
            <person name="Nakamura K."/>
            <person name="Harashima K."/>
        </authorList>
    </citation>
    <scope>NUCLEOTIDE SEQUENCE [GENOMIC DNA]</scope>
    <source>
        <strain>ATCC 19321 / DSM 30080 / NCPPB 800 / NRRL B-14773 / 20D3</strain>
    </source>
</reference>
<reference key="2">
    <citation type="submission" date="2002-08" db="EMBL/GenBank/DDBJ databases">
        <authorList>
            <person name="Misawa N."/>
            <person name="Nakagawa M."/>
            <person name="Kobayashi K."/>
            <person name="Yamano S."/>
            <person name="Izawa Y."/>
            <person name="Nakamura K."/>
            <person name="Harashima K."/>
        </authorList>
    </citation>
    <scope>SEQUENCE REVISION TO N-TERMINUS</scope>
</reference>
<reference key="3">
    <citation type="journal article" date="1998" name="Biochim. Biophys. Acta">
        <title>Expression of an active phytoene synthase from Erwinia uredovora and biochemical properties of the enzyme.</title>
        <authorList>
            <person name="Neudert U."/>
            <person name="Martinez-Ferez I.M."/>
            <person name="Fraser P.D."/>
            <person name="Sandmann G."/>
        </authorList>
    </citation>
    <scope>FUNCTION</scope>
    <scope>CATALYTIC ACTIVITY</scope>
    <scope>BIOPHYSICOCHEMICAL PROPERTIES</scope>
    <scope>ACTIVITY REGULATION</scope>
    <scope>COFACTOR</scope>
</reference>
<dbReference type="EC" id="2.5.1.32" evidence="3"/>
<dbReference type="EMBL" id="D90087">
    <property type="protein sequence ID" value="BAA14128.2"/>
    <property type="molecule type" value="Genomic_DNA"/>
</dbReference>
<dbReference type="PIR" id="E37802">
    <property type="entry name" value="E37802"/>
</dbReference>
<dbReference type="RefSeq" id="WP_013027995.1">
    <property type="nucleotide sequence ID" value="NZ_WHOW01000007.1"/>
</dbReference>
<dbReference type="SMR" id="P21683"/>
<dbReference type="GeneID" id="57270484"/>
<dbReference type="SABIO-RK" id="P21683"/>
<dbReference type="UniPathway" id="UPA00799"/>
<dbReference type="GO" id="GO:0046905">
    <property type="term" value="F:15-cis-phytoene synthase activity"/>
    <property type="evidence" value="ECO:0000314"/>
    <property type="project" value="UniProtKB"/>
</dbReference>
<dbReference type="GO" id="GO:0004311">
    <property type="term" value="F:geranylgeranyl diphosphate synthase activity"/>
    <property type="evidence" value="ECO:0007669"/>
    <property type="project" value="InterPro"/>
</dbReference>
<dbReference type="GO" id="GO:0046872">
    <property type="term" value="F:metal ion binding"/>
    <property type="evidence" value="ECO:0007669"/>
    <property type="project" value="UniProtKB-KW"/>
</dbReference>
<dbReference type="GO" id="GO:0051996">
    <property type="term" value="F:squalene synthase [NAD(P)H] activity"/>
    <property type="evidence" value="ECO:0007669"/>
    <property type="project" value="InterPro"/>
</dbReference>
<dbReference type="GO" id="GO:0016117">
    <property type="term" value="P:carotenoid biosynthetic process"/>
    <property type="evidence" value="ECO:0000314"/>
    <property type="project" value="UniProtKB"/>
</dbReference>
<dbReference type="CDD" id="cd00683">
    <property type="entry name" value="Trans_IPPS_HH"/>
    <property type="match status" value="1"/>
</dbReference>
<dbReference type="FunFam" id="1.10.600.10:FF:000020">
    <property type="entry name" value="Phytoene synthase"/>
    <property type="match status" value="1"/>
</dbReference>
<dbReference type="Gene3D" id="1.10.600.10">
    <property type="entry name" value="Farnesyl Diphosphate Synthase"/>
    <property type="match status" value="1"/>
</dbReference>
<dbReference type="InterPro" id="IPR008949">
    <property type="entry name" value="Isoprenoid_synthase_dom_sf"/>
</dbReference>
<dbReference type="InterPro" id="IPR053452">
    <property type="entry name" value="Phytoene_synthase-rel"/>
</dbReference>
<dbReference type="InterPro" id="IPR002060">
    <property type="entry name" value="Squ/phyt_synthse"/>
</dbReference>
<dbReference type="InterPro" id="IPR019845">
    <property type="entry name" value="Squalene/phytoene_synthase_CS"/>
</dbReference>
<dbReference type="InterPro" id="IPR044843">
    <property type="entry name" value="Trans_IPPS_bact-type"/>
</dbReference>
<dbReference type="InterPro" id="IPR033904">
    <property type="entry name" value="Trans_IPPS_HH"/>
</dbReference>
<dbReference type="NCBIfam" id="NF042419">
    <property type="entry name" value="Phyto_syn_CrtB"/>
    <property type="match status" value="1"/>
</dbReference>
<dbReference type="PANTHER" id="PTHR31480">
    <property type="entry name" value="BIFUNCTIONAL LYCOPENE CYCLASE/PHYTOENE SYNTHASE"/>
    <property type="match status" value="1"/>
</dbReference>
<dbReference type="Pfam" id="PF00494">
    <property type="entry name" value="SQS_PSY"/>
    <property type="match status" value="1"/>
</dbReference>
<dbReference type="SFLD" id="SFLDG01212">
    <property type="entry name" value="Phytoene_synthase_like"/>
    <property type="match status" value="1"/>
</dbReference>
<dbReference type="SFLD" id="SFLDG01018">
    <property type="entry name" value="Squalene/Phytoene_Synthase_Lik"/>
    <property type="match status" value="1"/>
</dbReference>
<dbReference type="SUPFAM" id="SSF48576">
    <property type="entry name" value="Terpenoid synthases"/>
    <property type="match status" value="1"/>
</dbReference>
<dbReference type="PROSITE" id="PS01044">
    <property type="entry name" value="SQUALEN_PHYTOEN_SYN_1"/>
    <property type="match status" value="1"/>
</dbReference>
<dbReference type="PROSITE" id="PS01045">
    <property type="entry name" value="SQUALEN_PHYTOEN_SYN_2"/>
    <property type="match status" value="1"/>
</dbReference>
<name>CRTB_PANAN</name>
<organism>
    <name type="scientific">Pantoea ananas</name>
    <name type="common">Erwinia uredovora</name>
    <dbReference type="NCBI Taxonomy" id="553"/>
    <lineage>
        <taxon>Bacteria</taxon>
        <taxon>Pseudomonadati</taxon>
        <taxon>Pseudomonadota</taxon>
        <taxon>Gammaproteobacteria</taxon>
        <taxon>Enterobacterales</taxon>
        <taxon>Erwiniaceae</taxon>
        <taxon>Pantoea</taxon>
    </lineage>
</organism>
<evidence type="ECO:0000250" key="1">
    <source>
        <dbReference type="UniProtKB" id="D5KXJ0"/>
    </source>
</evidence>
<evidence type="ECO:0000256" key="2">
    <source>
        <dbReference type="SAM" id="MobiDB-lite"/>
    </source>
</evidence>
<evidence type="ECO:0000269" key="3">
    <source>
    </source>
</evidence>
<evidence type="ECO:0000305" key="4"/>
<feature type="chain" id="PRO_0000067429" description="15-cis-phytoene synthase">
    <location>
        <begin position="1"/>
        <end position="309"/>
    </location>
</feature>
<feature type="region of interest" description="Disordered" evidence="2">
    <location>
        <begin position="290"/>
        <end position="309"/>
    </location>
</feature>
<sequence>MNNPSLLNHAVETMAVGSKSFATASKLFDAKTRRSVLMLYAWCRHCDDVIDDQTLGFQARQPALQTPEQRLMQLEMKTRQAYAGSQMHEPAFAAFQEVAMAHDIAPAYAFDHLEGFAMDVREAQYSQLDDTLRYCYHVAGVVGLMMAQIMGVRDNATLDRACDLGLAFQLTNIARDIVDDAHAGRCYLPASWLEHEGLNKENYAAPENRQALSRIARRLVQEAEPYYLSATAGLAGLPLRSAWAIATAKQVYRKIGVKVEQAGQQAWDQRQSTTTPEKLTLLLAASGQALTSRMRAHPPRPAHLWQRPL</sequence>
<gene>
    <name type="primary">crtB</name>
</gene>
<protein>
    <recommendedName>
        <fullName evidence="4">15-cis-phytoene synthase</fullName>
        <shortName>PSase</shortName>
        <ecNumber evidence="3">2.5.1.32</ecNumber>
    </recommendedName>
</protein>
<keyword id="KW-0125">Carotenoid biosynthesis</keyword>
<keyword id="KW-0460">Magnesium</keyword>
<keyword id="KW-0464">Manganese</keyword>
<keyword id="KW-0479">Metal-binding</keyword>
<keyword id="KW-0808">Transferase</keyword>
<accession>P21683</accession>
<comment type="function">
    <text evidence="3">Involved in the biosynthesis of carotenoids. Catalyzes the condensation of two molecules of geranylgeranyl diphosphate (GGPP) to give prephytoene diphosphate (PPPP) and the subsequent rearrangement of the cyclopropylcarbinyl intermediate to yield the 15-cis-phytoene isomer.</text>
</comment>
<comment type="catalytic activity">
    <reaction evidence="3">
        <text>2 (2E,6E,10E)-geranylgeranyl diphosphate = 15-cis-phytoene + 2 diphosphate</text>
        <dbReference type="Rhea" id="RHEA:34475"/>
        <dbReference type="ChEBI" id="CHEBI:27787"/>
        <dbReference type="ChEBI" id="CHEBI:33019"/>
        <dbReference type="ChEBI" id="CHEBI:58756"/>
        <dbReference type="EC" id="2.5.1.32"/>
    </reaction>
</comment>
<comment type="cofactor">
    <cofactor evidence="3">
        <name>ATP</name>
        <dbReference type="ChEBI" id="CHEBI:30616"/>
    </cofactor>
    <text evidence="3">ATP is required for the transferase activity but it does not seem to be hydrolyzed during the reaction.</text>
</comment>
<comment type="cofactor">
    <cofactor evidence="3">
        <name>Mn(2+)</name>
        <dbReference type="ChEBI" id="CHEBI:29035"/>
    </cofactor>
    <cofactor evidence="3">
        <name>Mg(2+)</name>
        <dbReference type="ChEBI" id="CHEBI:18420"/>
    </cofactor>
</comment>
<comment type="activity regulation">
    <text evidence="3">Inhibited by phosphate ions and squalestatin.</text>
</comment>
<comment type="biophysicochemical properties">
    <kinetics>
        <KM evidence="3">41 uM for GGPP (at pH 8 and 37 degrees Celsius)</KM>
    </kinetics>
</comment>
<comment type="pathway">
    <text>Carotenoid biosynthesis; phytoene biosynthesis.</text>
</comment>
<comment type="similarity">
    <text evidence="4">Belongs to the phytoene/squalene synthase family.</text>
</comment>
<comment type="caution">
    <text evidence="1">The enzyme produces 15-cis-phytoene. The conversion to all-trans-phytoene is due to photoisomerisation.</text>
</comment>